<organism>
    <name type="scientific">Manihot esculenta</name>
    <name type="common">Cassava</name>
    <name type="synonym">Jatropha manihot</name>
    <dbReference type="NCBI Taxonomy" id="3983"/>
    <lineage>
        <taxon>Eukaryota</taxon>
        <taxon>Viridiplantae</taxon>
        <taxon>Streptophyta</taxon>
        <taxon>Embryophyta</taxon>
        <taxon>Tracheophyta</taxon>
        <taxon>Spermatophyta</taxon>
        <taxon>Magnoliopsida</taxon>
        <taxon>eudicotyledons</taxon>
        <taxon>Gunneridae</taxon>
        <taxon>Pentapetalae</taxon>
        <taxon>rosids</taxon>
        <taxon>fabids</taxon>
        <taxon>Malpighiales</taxon>
        <taxon>Euphorbiaceae</taxon>
        <taxon>Crotonoideae</taxon>
        <taxon>Manihoteae</taxon>
        <taxon>Manihot</taxon>
    </lineage>
</organism>
<sequence length="2312" mass="271669">MKGHQLKSWIFELREILREIKSVGSFIHIFFHQERFIKLLDSRIWSILLSRNSQGSTSNRYFTIKGVVLFVVVVLIYRINNRKMVERKNLYLTGLLPIPMNSIGPRNDTLEESFWSSNINRLIVSLLYLPKGKKISESSFLDPKESTWVLPITKKCIMSESNWGSRWWRNWIGKKRDSSCKISNETVAGIEISFKEKDIKYLEFLFVYYMDDPIRKDHDWELFDRLSPRKGRNIINLNSGQLFEILVKDWICYLMFAFREKIPIEVEGFFKQQGAGSTIQSNDIEHVSHLFSRKKWAISLQNCAQFHMWQFRQDLFVSWGNNPHESDFLRNISRENWIWLDNVWLVNKDRFFSKARNISSNIQYDSTRSSFVQGRNSSQLKGSSDQSRDHFDSISNEDSEYHTLINQRKIQQLKERSILWDPSFLQTERTEIESDRFPKCLSGYSSMSRLFTEGEKEMNNHLLPEEIEEFLGNPTRSIRSFFSDRSSELHLGSNPTERSTRNQKLLKKEQDVSFVPSRRSENKEIVNIFKIITYLQNTVSIHPISSDPGCDMVLKDELDMDSSNKISFLNKNPFFDLFHLFHDRNGGGYTLHHDFESEERFQEMADLFTLSITEPDLVYHKGFTFFIDSYGLDQKQFLNEVFNSRDESKKKSLLVLPPIFYEENESFYRRIRKKWVRISCGNDLEDPKQKIVVFASNNIMEAVNQYGLILNLIQIQYSTYGYIRNVLTQFFLMNRSDRNFEYGIQRDQIGNDTLNHRTIMKYTINQHLSNLKQSQKKWFDPLIFIFLSRTERSMNWDPNAYRYKWSNGSKNFQEHLEHFISEQKSRFLFQVVFDRLRINQYSIDWSEVIDKKDLSKSLRFFLSKLLLFLSKFLLFLSNSLPFFFVSFGNIPIHRSEIHIYELKGPNDQLCNQLVEPIGLQIVHLKKLKPFLLLLDDHDTSQKSKFLINGGTISPFLFNKIPKWMIDSFHTRNNRRKSFDNTDSYFSMISHDQDNWLNPVKPFHRSSLISSFYKANRLRFLNNLHHFCFYCNKRFPFYVEKARIKNYDFTYGQFLNILFIRNKIFSLCGGKKKHAFLERDTISPIESQVSNIFIPNDFPQSGNERYNLYKSFHFPIRSDPFVRRAIYSIADISGTPLTEGQIVNFERTYCQPLSDMNLSDSEGKNLHQYLNFNSNMGLIHTPCSEKYLPSEKRKKRSLCLKKCVEKGQMYRTFQRDNAFSTLSKWNLFQTYMPWFLTSTGYKYLNLIFLDTFSDLLPILSSSQKFLSIFHDIMHGSDISWLIFQKRLWKICRNLISEISSKCLHNLLLSEEMIHRNNEPPLISTHLRSPNVREFLYSILFLLLVAGYLVCTHLLFVSHAYSELQTEFEKVKSLMIPSYMIELRKLLDRYPTSELNSFWLKNLFLVALEQLGDFLEEMRGSASGGNMLWGGGPAYGVKSIRSKKKFWNINLIDLISIIPNPINRITFSRNTRHLSHTSKEIYSLIRKRKNVNGDWIDDKIESLVANSDWIDDKEREFLVQFSTLTTEKRIDQILLSLTHSDHLSKNDSGYQMIEEPGAIYLRYLVDIHKKYLMNYEFNTPCLAERRIFLAYYQTTTYSQTSCGVNSFHFPSHGKPFSLRLALSPSRGILVIGSIGTGRSYLVKYLATNSYLPFVTVFLNKFLNNKPKGFLIDDSDDIDDSDDIDDSDDIDASDDIDVSDDIDVSDDDIDRDFDFDTELEFLTTMDALTIDMMPEIEINRFYITLQFELAKAMSPCIIWIPNIHDLDVNESNYLSLGLLVNYLSRDCERCSTRNILVIASTHIPQKVDPALIAPNKLNTCIKIRRFLIPQQRKHFFTLSYTRGFHLENKMFHTNGFGSITMGSNVRDLVALTNEALSISITQKKSIIDTNIIRSALHRQTWDLRSRVRSVQDHGIFFYQIGRAVAQNVFLSNCPIDPISIYMKKKSCNEGDSYLYKWYFELGTSMKKLTILLYLLSCSAGSVAQDLWSLPGPDEKNGITYYGLVENDSDLVHGLLEVEGALVGSSRTEKDCSQFDNDRVTLLLRPEPRSPLDMMQNGSCSILDQRFLYEKYESEFEEGEGEEVLDPQQIEEDLFTHIVWAPRIWRPWGFLFDCIERPNELGFPYWARSFRGKRIIYDEEIIYDEEIIYDEEDELQENDSEFLQSGTMQYQIRDRSSKEQGFFRISQFIWDPADPLFFLFKDQPFVSVFSHREFFADEEMSKGLLTSQTDPPTSIYKRWFIKNTQEKRFELLIHRQRWLRTNSSLSNGFFRSNTLSESYQYLSNLFLSNGTLLDQMTKALLRKRWLFPDEMKIGFM</sequence>
<comment type="function">
    <text evidence="1">Probable ATPase of unknown function. Its presence in a non-photosynthetic plant (Epifagus virginiana) and experiments in tobacco indicate that it has an essential function which is probably not related to photosynthesis.</text>
</comment>
<comment type="subcellular location">
    <subcellularLocation>
        <location evidence="1">Plastid</location>
        <location evidence="1">Chloroplast stroma</location>
    </subcellularLocation>
</comment>
<comment type="similarity">
    <text evidence="1">Belongs to the Ycf2 family.</text>
</comment>
<gene>
    <name evidence="1" type="primary">ycf2</name>
</gene>
<protein>
    <recommendedName>
        <fullName evidence="1">Protein Ycf2</fullName>
    </recommendedName>
</protein>
<accession>B1NWJ3</accession>
<dbReference type="EMBL" id="EU117376">
    <property type="protein sequence ID" value="ABV66197.1"/>
    <property type="molecule type" value="Genomic_DNA"/>
</dbReference>
<dbReference type="RefSeq" id="YP_001718480.1">
    <property type="nucleotide sequence ID" value="NC_010433.1"/>
</dbReference>
<dbReference type="GeneID" id="6000000"/>
<dbReference type="KEGG" id="mesc:6000000"/>
<dbReference type="OrthoDB" id="1593072at2759"/>
<dbReference type="GO" id="GO:0009570">
    <property type="term" value="C:chloroplast stroma"/>
    <property type="evidence" value="ECO:0007669"/>
    <property type="project" value="UniProtKB-SubCell"/>
</dbReference>
<dbReference type="GO" id="GO:0005524">
    <property type="term" value="F:ATP binding"/>
    <property type="evidence" value="ECO:0007669"/>
    <property type="project" value="UniProtKB-KW"/>
</dbReference>
<dbReference type="GO" id="GO:0016887">
    <property type="term" value="F:ATP hydrolysis activity"/>
    <property type="evidence" value="ECO:0007669"/>
    <property type="project" value="InterPro"/>
</dbReference>
<dbReference type="CDD" id="cd19505">
    <property type="entry name" value="RecA-like_Ycf2"/>
    <property type="match status" value="1"/>
</dbReference>
<dbReference type="Gene3D" id="3.40.50.300">
    <property type="entry name" value="P-loop containing nucleotide triphosphate hydrolases"/>
    <property type="match status" value="1"/>
</dbReference>
<dbReference type="HAMAP" id="MF_01330">
    <property type="entry name" value="Ycf2"/>
    <property type="match status" value="1"/>
</dbReference>
<dbReference type="InterPro" id="IPR003593">
    <property type="entry name" value="AAA+_ATPase"/>
</dbReference>
<dbReference type="InterPro" id="IPR003959">
    <property type="entry name" value="ATPase_AAA_core"/>
</dbReference>
<dbReference type="InterPro" id="IPR027417">
    <property type="entry name" value="P-loop_NTPase"/>
</dbReference>
<dbReference type="InterPro" id="IPR008543">
    <property type="entry name" value="Uncharacterised_Ycf2"/>
</dbReference>
<dbReference type="InterPro" id="IPR056777">
    <property type="entry name" value="Ycf2_N"/>
</dbReference>
<dbReference type="PANTHER" id="PTHR33078:SF51">
    <property type="entry name" value="PROTEIN TIC 214"/>
    <property type="match status" value="1"/>
</dbReference>
<dbReference type="PANTHER" id="PTHR33078">
    <property type="entry name" value="PROTEIN YCF2-RELATED"/>
    <property type="match status" value="1"/>
</dbReference>
<dbReference type="Pfam" id="PF00004">
    <property type="entry name" value="AAA"/>
    <property type="match status" value="1"/>
</dbReference>
<dbReference type="Pfam" id="PF05695">
    <property type="entry name" value="Ycf2"/>
    <property type="match status" value="1"/>
</dbReference>
<dbReference type="SMART" id="SM00382">
    <property type="entry name" value="AAA"/>
    <property type="match status" value="1"/>
</dbReference>
<dbReference type="SUPFAM" id="SSF52540">
    <property type="entry name" value="P-loop containing nucleoside triphosphate hydrolases"/>
    <property type="match status" value="1"/>
</dbReference>
<keyword id="KW-0067">ATP-binding</keyword>
<keyword id="KW-0150">Chloroplast</keyword>
<keyword id="KW-0547">Nucleotide-binding</keyword>
<keyword id="KW-0934">Plastid</keyword>
<feature type="chain" id="PRO_0000343779" description="Protein Ycf2">
    <location>
        <begin position="1"/>
        <end position="2312"/>
    </location>
</feature>
<feature type="binding site" evidence="1">
    <location>
        <begin position="1630"/>
        <end position="1637"/>
    </location>
    <ligand>
        <name>ATP</name>
        <dbReference type="ChEBI" id="CHEBI:30616"/>
    </ligand>
</feature>
<proteinExistence type="inferred from homology"/>
<geneLocation type="chloroplast"/>
<name>YCF2_MANES</name>
<evidence type="ECO:0000255" key="1">
    <source>
        <dbReference type="HAMAP-Rule" id="MF_01330"/>
    </source>
</evidence>
<reference key="1">
    <citation type="journal article" date="2008" name="Theor. Appl. Genet.">
        <title>The complete nucleotide sequence of the cassava (Manihot esculenta) chloroplast genome and the evolution of atpF in Malpighiales: RNA editing and multiple losses of a group II intron.</title>
        <authorList>
            <person name="Daniell H."/>
            <person name="Wurdack K.J."/>
            <person name="Kanagaraj A."/>
            <person name="Lee S.-B."/>
            <person name="Saski C."/>
            <person name="Jansen R.K."/>
        </authorList>
    </citation>
    <scope>NUCLEOTIDE SEQUENCE [LARGE SCALE GENOMIC DNA]</scope>
    <source>
        <strain>cv. TME3</strain>
    </source>
</reference>